<comment type="function">
    <text evidence="1">Regulates transcriptional attenuation of the pyrimidine nucleotide (pyr) operon by binding in a uridine-dependent manner to specific sites on pyr mRNA. This disrupts an antiterminator hairpin in the RNA and favors formation of a downstream transcription terminator, leading to a reduced expression of downstream genes.</text>
</comment>
<comment type="function">
    <text evidence="1">Also displays a weak uracil phosphoribosyltransferase activity which is not physiologically significant.</text>
</comment>
<comment type="catalytic activity">
    <reaction evidence="1">
        <text>UMP + diphosphate = 5-phospho-alpha-D-ribose 1-diphosphate + uracil</text>
        <dbReference type="Rhea" id="RHEA:13017"/>
        <dbReference type="ChEBI" id="CHEBI:17568"/>
        <dbReference type="ChEBI" id="CHEBI:33019"/>
        <dbReference type="ChEBI" id="CHEBI:57865"/>
        <dbReference type="ChEBI" id="CHEBI:58017"/>
        <dbReference type="EC" id="2.4.2.9"/>
    </reaction>
</comment>
<comment type="subunit">
    <text evidence="1">Homodimer and homohexamer; in equilibrium.</text>
</comment>
<comment type="similarity">
    <text evidence="1">Belongs to the purine/pyrimidine phosphoribosyltransferase family. PyrR subfamily.</text>
</comment>
<accession>C1CEN2</accession>
<sequence length="173" mass="19608">MKTKEVVDELTVKRAITRITYEIIERNKDLNKIVLAGIKTRGVFIAHRIQERLKQLENLSVPVVELDTKPFRDDVKSGEDTSLVSVDVTDREVILVDDVLYTGRTIRAAIDNIVGHGRPARVSLAVLVDRGHRELPIRPDYVGKNIPTSRSEEIIVEMTELDDQDRVLITEEA</sequence>
<dbReference type="EC" id="2.4.2.9" evidence="1"/>
<dbReference type="EMBL" id="CP000919">
    <property type="protein sequence ID" value="ACO18785.1"/>
    <property type="molecule type" value="Genomic_DNA"/>
</dbReference>
<dbReference type="RefSeq" id="WP_000850024.1">
    <property type="nucleotide sequence ID" value="NC_012466.1"/>
</dbReference>
<dbReference type="SMR" id="C1CEN2"/>
<dbReference type="GeneID" id="45653435"/>
<dbReference type="KEGG" id="sjj:SPJ_1192"/>
<dbReference type="HOGENOM" id="CLU_094234_2_1_9"/>
<dbReference type="Proteomes" id="UP000002206">
    <property type="component" value="Chromosome"/>
</dbReference>
<dbReference type="GO" id="GO:0003723">
    <property type="term" value="F:RNA binding"/>
    <property type="evidence" value="ECO:0007669"/>
    <property type="project" value="UniProtKB-UniRule"/>
</dbReference>
<dbReference type="GO" id="GO:0004845">
    <property type="term" value="F:uracil phosphoribosyltransferase activity"/>
    <property type="evidence" value="ECO:0007669"/>
    <property type="project" value="UniProtKB-UniRule"/>
</dbReference>
<dbReference type="GO" id="GO:0006353">
    <property type="term" value="P:DNA-templated transcription termination"/>
    <property type="evidence" value="ECO:0007669"/>
    <property type="project" value="UniProtKB-UniRule"/>
</dbReference>
<dbReference type="CDD" id="cd06223">
    <property type="entry name" value="PRTases_typeI"/>
    <property type="match status" value="1"/>
</dbReference>
<dbReference type="FunFam" id="3.40.50.2020:FF:000020">
    <property type="entry name" value="Bifunctional protein PyrR"/>
    <property type="match status" value="1"/>
</dbReference>
<dbReference type="Gene3D" id="3.40.50.2020">
    <property type="match status" value="1"/>
</dbReference>
<dbReference type="HAMAP" id="MF_01219">
    <property type="entry name" value="PyrR"/>
    <property type="match status" value="1"/>
</dbReference>
<dbReference type="InterPro" id="IPR000836">
    <property type="entry name" value="PRibTrfase_dom"/>
</dbReference>
<dbReference type="InterPro" id="IPR029057">
    <property type="entry name" value="PRTase-like"/>
</dbReference>
<dbReference type="InterPro" id="IPR023050">
    <property type="entry name" value="PyrR"/>
</dbReference>
<dbReference type="InterPro" id="IPR050137">
    <property type="entry name" value="PyrR_bifunctional"/>
</dbReference>
<dbReference type="NCBIfam" id="NF003548">
    <property type="entry name" value="PRK05205.1-4"/>
    <property type="match status" value="1"/>
</dbReference>
<dbReference type="NCBIfam" id="NF003549">
    <property type="entry name" value="PRK05205.1-5"/>
    <property type="match status" value="1"/>
</dbReference>
<dbReference type="PANTHER" id="PTHR11608">
    <property type="entry name" value="BIFUNCTIONAL PROTEIN PYRR"/>
    <property type="match status" value="1"/>
</dbReference>
<dbReference type="PANTHER" id="PTHR11608:SF0">
    <property type="entry name" value="BIFUNCTIONAL PROTEIN PYRR"/>
    <property type="match status" value="1"/>
</dbReference>
<dbReference type="Pfam" id="PF00156">
    <property type="entry name" value="Pribosyltran"/>
    <property type="match status" value="1"/>
</dbReference>
<dbReference type="SUPFAM" id="SSF53271">
    <property type="entry name" value="PRTase-like"/>
    <property type="match status" value="1"/>
</dbReference>
<name>PYRR_STRZJ</name>
<reference key="1">
    <citation type="journal article" date="2010" name="Genome Biol.">
        <title>Structure and dynamics of the pan-genome of Streptococcus pneumoniae and closely related species.</title>
        <authorList>
            <person name="Donati C."/>
            <person name="Hiller N.L."/>
            <person name="Tettelin H."/>
            <person name="Muzzi A."/>
            <person name="Croucher N.J."/>
            <person name="Angiuoli S.V."/>
            <person name="Oggioni M."/>
            <person name="Dunning Hotopp J.C."/>
            <person name="Hu F.Z."/>
            <person name="Riley D.R."/>
            <person name="Covacci A."/>
            <person name="Mitchell T.J."/>
            <person name="Bentley S.D."/>
            <person name="Kilian M."/>
            <person name="Ehrlich G.D."/>
            <person name="Rappuoli R."/>
            <person name="Moxon E.R."/>
            <person name="Masignani V."/>
        </authorList>
    </citation>
    <scope>NUCLEOTIDE SEQUENCE [LARGE SCALE GENOMIC DNA]</scope>
    <source>
        <strain>JJA</strain>
    </source>
</reference>
<feature type="chain" id="PRO_1000164857" description="Bifunctional protein PyrR">
    <location>
        <begin position="1"/>
        <end position="173"/>
    </location>
</feature>
<feature type="short sequence motif" description="PRPP-binding" evidence="1">
    <location>
        <begin position="93"/>
        <end position="105"/>
    </location>
</feature>
<organism>
    <name type="scientific">Streptococcus pneumoniae (strain JJA)</name>
    <dbReference type="NCBI Taxonomy" id="488222"/>
    <lineage>
        <taxon>Bacteria</taxon>
        <taxon>Bacillati</taxon>
        <taxon>Bacillota</taxon>
        <taxon>Bacilli</taxon>
        <taxon>Lactobacillales</taxon>
        <taxon>Streptococcaceae</taxon>
        <taxon>Streptococcus</taxon>
    </lineage>
</organism>
<proteinExistence type="inferred from homology"/>
<protein>
    <recommendedName>
        <fullName evidence="1">Bifunctional protein PyrR</fullName>
    </recommendedName>
    <domain>
        <recommendedName>
            <fullName evidence="1">Pyrimidine operon regulatory protein</fullName>
        </recommendedName>
    </domain>
    <domain>
        <recommendedName>
            <fullName evidence="1">Uracil phosphoribosyltransferase</fullName>
            <shortName evidence="1">UPRTase</shortName>
            <ecNumber evidence="1">2.4.2.9</ecNumber>
        </recommendedName>
    </domain>
</protein>
<keyword id="KW-0328">Glycosyltransferase</keyword>
<keyword id="KW-0694">RNA-binding</keyword>
<keyword id="KW-0804">Transcription</keyword>
<keyword id="KW-0805">Transcription regulation</keyword>
<keyword id="KW-0806">Transcription termination</keyword>
<keyword id="KW-0808">Transferase</keyword>
<evidence type="ECO:0000255" key="1">
    <source>
        <dbReference type="HAMAP-Rule" id="MF_01219"/>
    </source>
</evidence>
<gene>
    <name evidence="1" type="primary">pyrR</name>
    <name type="ordered locus">SPJ_1192</name>
</gene>